<comment type="miscellaneous">
    <text>The ABPC22 and PC9241 sequences are identical.</text>
</comment>
<keyword id="KW-1064">Adaptive immunity</keyword>
<keyword id="KW-0903">Direct protein sequencing</keyword>
<keyword id="KW-1015">Disulfide bond</keyword>
<keyword id="KW-0391">Immunity</keyword>
<keyword id="KW-1280">Immunoglobulin</keyword>
<keyword id="KW-1185">Reference proteome</keyword>
<dbReference type="SMR" id="P01662"/>
<dbReference type="FunCoup" id="P01662">
    <property type="interactions" value="756"/>
</dbReference>
<dbReference type="InParanoid" id="P01662"/>
<dbReference type="Proteomes" id="UP000000589">
    <property type="component" value="Unplaced"/>
</dbReference>
<dbReference type="RNAct" id="P01662">
    <property type="molecule type" value="protein"/>
</dbReference>
<dbReference type="GO" id="GO:0019814">
    <property type="term" value="C:immunoglobulin complex"/>
    <property type="evidence" value="ECO:0000318"/>
    <property type="project" value="GO_Central"/>
</dbReference>
<dbReference type="GO" id="GO:0002250">
    <property type="term" value="P:adaptive immune response"/>
    <property type="evidence" value="ECO:0007669"/>
    <property type="project" value="UniProtKB-KW"/>
</dbReference>
<dbReference type="GO" id="GO:0006955">
    <property type="term" value="P:immune response"/>
    <property type="evidence" value="ECO:0000318"/>
    <property type="project" value="GO_Central"/>
</dbReference>
<dbReference type="CDD" id="cd04980">
    <property type="entry name" value="IgV_L_kappa"/>
    <property type="match status" value="1"/>
</dbReference>
<dbReference type="FunFam" id="2.60.40.10:FF:000350">
    <property type="entry name" value="Immunoglobulin kappa chain variable 18-36"/>
    <property type="match status" value="1"/>
</dbReference>
<dbReference type="Gene3D" id="2.60.40.10">
    <property type="entry name" value="Immunoglobulins"/>
    <property type="match status" value="1"/>
</dbReference>
<dbReference type="InterPro" id="IPR007110">
    <property type="entry name" value="Ig-like_dom"/>
</dbReference>
<dbReference type="InterPro" id="IPR036179">
    <property type="entry name" value="Ig-like_dom_sf"/>
</dbReference>
<dbReference type="InterPro" id="IPR013783">
    <property type="entry name" value="Ig-like_fold"/>
</dbReference>
<dbReference type="InterPro" id="IPR003599">
    <property type="entry name" value="Ig_sub"/>
</dbReference>
<dbReference type="InterPro" id="IPR013106">
    <property type="entry name" value="Ig_V-set"/>
</dbReference>
<dbReference type="InterPro" id="IPR050150">
    <property type="entry name" value="IgV_Light_Chain"/>
</dbReference>
<dbReference type="PANTHER" id="PTHR23267">
    <property type="entry name" value="IMMUNOGLOBULIN LIGHT CHAIN"/>
    <property type="match status" value="1"/>
</dbReference>
<dbReference type="Pfam" id="PF07686">
    <property type="entry name" value="V-set"/>
    <property type="match status" value="1"/>
</dbReference>
<dbReference type="SMART" id="SM00409">
    <property type="entry name" value="IG"/>
    <property type="match status" value="1"/>
</dbReference>
<dbReference type="SMART" id="SM00406">
    <property type="entry name" value="IGv"/>
    <property type="match status" value="1"/>
</dbReference>
<dbReference type="SUPFAM" id="SSF48726">
    <property type="entry name" value="Immunoglobulin"/>
    <property type="match status" value="1"/>
</dbReference>
<dbReference type="PROSITE" id="PS50835">
    <property type="entry name" value="IG_LIKE"/>
    <property type="match status" value="1"/>
</dbReference>
<accession>P01662</accession>
<protein>
    <recommendedName>
        <fullName>Ig kappa chain V-III region ABPC 22/PC 9245</fullName>
    </recommendedName>
</protein>
<sequence>NIVLTQSPASLAVSLGQRATISCRASESVDSYGNSFMHWYQQKPGQPPKLLIYLASNLESGVPARFSGSGSRTDFTLTIDPVEADDAATYYCQQNNEDPYTFGGGTKLEIK</sequence>
<proteinExistence type="evidence at protein level"/>
<evidence type="ECO:0000255" key="1">
    <source>
        <dbReference type="PROSITE-ProRule" id="PRU00114"/>
    </source>
</evidence>
<reference key="1">
    <citation type="journal article" date="1978" name="Proc. Natl. Acad. Sci. U.S.A.">
        <title>Mechanisms of antibody diversity: multiple genes encode structurally related mouse kappa variable regions.</title>
        <authorList>
            <person name="McKean D.J."/>
            <person name="Bell M."/>
            <person name="Potter M."/>
        </authorList>
    </citation>
    <scope>PROTEIN SEQUENCE (ABPC 22)</scope>
</reference>
<reference key="2">
    <citation type="journal article" date="1978" name="Nature">
        <title>Rearrangement of genetic information may produce immunoglobulin diversity.</title>
        <authorList>
            <person name="Weigert M."/>
            <person name="Gatmaitan L."/>
            <person name="Loh E."/>
            <person name="Schilling J."/>
            <person name="Hood L.E."/>
        </authorList>
    </citation>
    <scope>PROTEIN SEQUENCE (PC 9245)</scope>
</reference>
<name>KV3AA_MOUSE</name>
<organism>
    <name type="scientific">Mus musculus</name>
    <name type="common">Mouse</name>
    <dbReference type="NCBI Taxonomy" id="10090"/>
    <lineage>
        <taxon>Eukaryota</taxon>
        <taxon>Metazoa</taxon>
        <taxon>Chordata</taxon>
        <taxon>Craniata</taxon>
        <taxon>Vertebrata</taxon>
        <taxon>Euteleostomi</taxon>
        <taxon>Mammalia</taxon>
        <taxon>Eutheria</taxon>
        <taxon>Euarchontoglires</taxon>
        <taxon>Glires</taxon>
        <taxon>Rodentia</taxon>
        <taxon>Myomorpha</taxon>
        <taxon>Muroidea</taxon>
        <taxon>Muridae</taxon>
        <taxon>Murinae</taxon>
        <taxon>Mus</taxon>
        <taxon>Mus</taxon>
    </lineage>
</organism>
<feature type="chain" id="PRO_0000059784" description="Ig kappa chain V-III region ABPC 22/PC 9245">
    <location>
        <begin position="1"/>
        <end position="111" status="greater than"/>
    </location>
</feature>
<feature type="region of interest" description="Framework-1">
    <location>
        <begin position="1"/>
        <end position="23"/>
    </location>
</feature>
<feature type="region of interest" description="Complementarity-determining-1">
    <location>
        <begin position="24"/>
        <end position="38"/>
    </location>
</feature>
<feature type="region of interest" description="Framework-2">
    <location>
        <begin position="39"/>
        <end position="53"/>
    </location>
</feature>
<feature type="region of interest" description="Complementarity-determining-2">
    <location>
        <begin position="54"/>
        <end position="60"/>
    </location>
</feature>
<feature type="region of interest" description="Framework-3">
    <location>
        <begin position="61"/>
        <end position="92"/>
    </location>
</feature>
<feature type="region of interest" description="Complementarity-determining-3">
    <location>
        <begin position="93"/>
        <end position="101"/>
    </location>
</feature>
<feature type="region of interest" description="Framework-4">
    <location>
        <begin position="102"/>
        <end position="111"/>
    </location>
</feature>
<feature type="disulfide bond" evidence="1">
    <location>
        <begin position="23"/>
        <end position="92"/>
    </location>
</feature>
<feature type="non-terminal residue">
    <location>
        <position position="111"/>
    </location>
</feature>